<evidence type="ECO:0000255" key="1">
    <source>
        <dbReference type="HAMAP-Rule" id="MF_00636"/>
    </source>
</evidence>
<protein>
    <recommendedName>
        <fullName evidence="1">Nucleotide-binding protein TGRD_433</fullName>
    </recommendedName>
</protein>
<gene>
    <name type="ordered locus">TGRD_433</name>
</gene>
<dbReference type="EMBL" id="AP009510">
    <property type="protein sequence ID" value="BAG13916.1"/>
    <property type="molecule type" value="Genomic_DNA"/>
</dbReference>
<dbReference type="RefSeq" id="WP_015423442.1">
    <property type="nucleotide sequence ID" value="NC_020419.1"/>
</dbReference>
<dbReference type="SMR" id="B1H084"/>
<dbReference type="STRING" id="471821.TGRD_433"/>
<dbReference type="KEGG" id="rsd:TGRD_433"/>
<dbReference type="PATRIC" id="fig|471821.5.peg.707"/>
<dbReference type="HOGENOM" id="CLU_059558_0_0_0"/>
<dbReference type="Proteomes" id="UP000001691">
    <property type="component" value="Chromosome"/>
</dbReference>
<dbReference type="GO" id="GO:0005524">
    <property type="term" value="F:ATP binding"/>
    <property type="evidence" value="ECO:0007669"/>
    <property type="project" value="UniProtKB-UniRule"/>
</dbReference>
<dbReference type="GO" id="GO:0005525">
    <property type="term" value="F:GTP binding"/>
    <property type="evidence" value="ECO:0007669"/>
    <property type="project" value="UniProtKB-UniRule"/>
</dbReference>
<dbReference type="HAMAP" id="MF_00636">
    <property type="entry name" value="RapZ_like"/>
    <property type="match status" value="1"/>
</dbReference>
<dbReference type="InterPro" id="IPR027417">
    <property type="entry name" value="P-loop_NTPase"/>
</dbReference>
<dbReference type="InterPro" id="IPR005337">
    <property type="entry name" value="RapZ-like"/>
</dbReference>
<dbReference type="InterPro" id="IPR053930">
    <property type="entry name" value="RapZ-like_N"/>
</dbReference>
<dbReference type="InterPro" id="IPR053931">
    <property type="entry name" value="RapZ_C"/>
</dbReference>
<dbReference type="NCBIfam" id="NF003828">
    <property type="entry name" value="PRK05416.1"/>
    <property type="match status" value="1"/>
</dbReference>
<dbReference type="PANTHER" id="PTHR30448">
    <property type="entry name" value="RNASE ADAPTER PROTEIN RAPZ"/>
    <property type="match status" value="1"/>
</dbReference>
<dbReference type="PANTHER" id="PTHR30448:SF0">
    <property type="entry name" value="RNASE ADAPTER PROTEIN RAPZ"/>
    <property type="match status" value="1"/>
</dbReference>
<dbReference type="Pfam" id="PF22740">
    <property type="entry name" value="PapZ_C"/>
    <property type="match status" value="1"/>
</dbReference>
<dbReference type="Pfam" id="PF03668">
    <property type="entry name" value="RapZ-like_N"/>
    <property type="match status" value="1"/>
</dbReference>
<dbReference type="PIRSF" id="PIRSF005052">
    <property type="entry name" value="P-loopkin"/>
    <property type="match status" value="1"/>
</dbReference>
<dbReference type="SUPFAM" id="SSF52540">
    <property type="entry name" value="P-loop containing nucleoside triphosphate hydrolases"/>
    <property type="match status" value="1"/>
</dbReference>
<accession>B1H084</accession>
<sequence length="287" mass="32665">MIKLYIISGMSGAGKSQALKIFEDFGFVCVDNIPIQIVADFIDICLKDSIRYKNVAISVDSRAGKSLTSFKDLLIVFKKKNIGYKIIFFNATDSVLLRRYSETRRRHPLGKSVSEGIKLERKIMDRIFTVADEIIDTSDLTIGELKKVISMLADICQSGKQYLNTSILSFGYKYGLPNDADIVYDVRFITNPNYVHGLKFKTGRDEAVRKYIERQKEFSVFFNIFSKLIETTLPGYIKESKSHLTIAIGCTGGQHRSVFTAEKLAGFLKSKKYKVKLNHRDILRHDN</sequence>
<feature type="chain" id="PRO_0000383302" description="Nucleotide-binding protein TGRD_433">
    <location>
        <begin position="1"/>
        <end position="287"/>
    </location>
</feature>
<feature type="binding site" evidence="1">
    <location>
        <begin position="9"/>
        <end position="16"/>
    </location>
    <ligand>
        <name>ATP</name>
        <dbReference type="ChEBI" id="CHEBI:30616"/>
    </ligand>
</feature>
<feature type="binding site" evidence="1">
    <location>
        <begin position="60"/>
        <end position="63"/>
    </location>
    <ligand>
        <name>GTP</name>
        <dbReference type="ChEBI" id="CHEBI:37565"/>
    </ligand>
</feature>
<reference key="1">
    <citation type="journal article" date="2008" name="Proc. Natl. Acad. Sci. U.S.A.">
        <title>Complete genome of the uncultured termite group 1 bacteria in a single host protist cell.</title>
        <authorList>
            <person name="Hongoh Y."/>
            <person name="Sharma V.K."/>
            <person name="Prakash T."/>
            <person name="Noda S."/>
            <person name="Taylor T.D."/>
            <person name="Kudo T."/>
            <person name="Sakaki Y."/>
            <person name="Toyoda A."/>
            <person name="Hattori M."/>
            <person name="Ohkuma M."/>
        </authorList>
    </citation>
    <scope>NUCLEOTIDE SEQUENCE [LARGE SCALE GENOMIC DNA]</scope>
</reference>
<comment type="function">
    <text evidence="1">Displays ATPase and GTPase activities.</text>
</comment>
<comment type="similarity">
    <text evidence="1">Belongs to the RapZ-like family.</text>
</comment>
<keyword id="KW-0067">ATP-binding</keyword>
<keyword id="KW-0342">GTP-binding</keyword>
<keyword id="KW-0547">Nucleotide-binding</keyword>
<proteinExistence type="inferred from homology"/>
<name>Y433_ENDTX</name>
<organism>
    <name type="scientific">Endomicrobium trichonymphae</name>
    <dbReference type="NCBI Taxonomy" id="1408204"/>
    <lineage>
        <taxon>Bacteria</taxon>
        <taxon>Pseudomonadati</taxon>
        <taxon>Elusimicrobiota</taxon>
        <taxon>Endomicrobiia</taxon>
        <taxon>Endomicrobiales</taxon>
        <taxon>Endomicrobiaceae</taxon>
        <taxon>Candidatus Endomicrobiellum</taxon>
    </lineage>
</organism>